<protein>
    <recommendedName>
        <fullName evidence="8">T cell receptor beta variable 6-1</fullName>
    </recommendedName>
</protein>
<gene>
    <name evidence="8" type="primary">TRBV6-1</name>
</gene>
<name>TVB61_HUMAN</name>
<evidence type="ECO:0000255" key="1"/>
<evidence type="ECO:0000255" key="2">
    <source>
        <dbReference type="PROSITE-ProRule" id="PRU00114"/>
    </source>
</evidence>
<evidence type="ECO:0000303" key="3">
    <source>
    </source>
</evidence>
<evidence type="ECO:0000303" key="4">
    <source>
    </source>
</evidence>
<evidence type="ECO:0000303" key="5">
    <source>
    </source>
</evidence>
<evidence type="ECO:0000303" key="6">
    <source>
    </source>
</evidence>
<evidence type="ECO:0000303" key="7">
    <source>
    </source>
</evidence>
<evidence type="ECO:0000303" key="8">
    <source ref="2"/>
</evidence>
<evidence type="ECO:0000305" key="9"/>
<sequence length="114" mass="12632">MSIGLLCCVAFSLLWASPVNAGVTQTPKFQVLKTGQSMTLQCAQDMNHNSMYWYRQDPGMGLRLIYYSASEGTTDKGEVPNGYNVSRLNKREFSLRLESAAPSQTSVYFCASSE</sequence>
<reference key="1">
    <citation type="journal article" date="2003" name="Nature">
        <title>The DNA sequence of human chromosome 7.</title>
        <authorList>
            <person name="Hillier L.W."/>
            <person name="Fulton R.S."/>
            <person name="Fulton L.A."/>
            <person name="Graves T.A."/>
            <person name="Pepin K.H."/>
            <person name="Wagner-McPherson C."/>
            <person name="Layman D."/>
            <person name="Maas J."/>
            <person name="Jaeger S."/>
            <person name="Walker R."/>
            <person name="Wylie K."/>
            <person name="Sekhon M."/>
            <person name="Becker M.C."/>
            <person name="O'Laughlin M.D."/>
            <person name="Schaller M.E."/>
            <person name="Fewell G.A."/>
            <person name="Delehaunty K.D."/>
            <person name="Miner T.L."/>
            <person name="Nash W.E."/>
            <person name="Cordes M."/>
            <person name="Du H."/>
            <person name="Sun H."/>
            <person name="Edwards J."/>
            <person name="Bradshaw-Cordum H."/>
            <person name="Ali J."/>
            <person name="Andrews S."/>
            <person name="Isak A."/>
            <person name="Vanbrunt A."/>
            <person name="Nguyen C."/>
            <person name="Du F."/>
            <person name="Lamar B."/>
            <person name="Courtney L."/>
            <person name="Kalicki J."/>
            <person name="Ozersky P."/>
            <person name="Bielicki L."/>
            <person name="Scott K."/>
            <person name="Holmes A."/>
            <person name="Harkins R."/>
            <person name="Harris A."/>
            <person name="Strong C.M."/>
            <person name="Hou S."/>
            <person name="Tomlinson C."/>
            <person name="Dauphin-Kohlberg S."/>
            <person name="Kozlowicz-Reilly A."/>
            <person name="Leonard S."/>
            <person name="Rohlfing T."/>
            <person name="Rock S.M."/>
            <person name="Tin-Wollam A.-M."/>
            <person name="Abbott A."/>
            <person name="Minx P."/>
            <person name="Maupin R."/>
            <person name="Strowmatt C."/>
            <person name="Latreille P."/>
            <person name="Miller N."/>
            <person name="Johnson D."/>
            <person name="Murray J."/>
            <person name="Woessner J.P."/>
            <person name="Wendl M.C."/>
            <person name="Yang S.-P."/>
            <person name="Schultz B.R."/>
            <person name="Wallis J.W."/>
            <person name="Spieth J."/>
            <person name="Bieri T.A."/>
            <person name="Nelson J.O."/>
            <person name="Berkowicz N."/>
            <person name="Wohldmann P.E."/>
            <person name="Cook L.L."/>
            <person name="Hickenbotham M.T."/>
            <person name="Eldred J."/>
            <person name="Williams D."/>
            <person name="Bedell J.A."/>
            <person name="Mardis E.R."/>
            <person name="Clifton S.W."/>
            <person name="Chissoe S.L."/>
            <person name="Marra M.A."/>
            <person name="Raymond C."/>
            <person name="Haugen E."/>
            <person name="Gillett W."/>
            <person name="Zhou Y."/>
            <person name="James R."/>
            <person name="Phelps K."/>
            <person name="Iadanoto S."/>
            <person name="Bubb K."/>
            <person name="Simms E."/>
            <person name="Levy R."/>
            <person name="Clendenning J."/>
            <person name="Kaul R."/>
            <person name="Kent W.J."/>
            <person name="Furey T.S."/>
            <person name="Baertsch R.A."/>
            <person name="Brent M.R."/>
            <person name="Keibler E."/>
            <person name="Flicek P."/>
            <person name="Bork P."/>
            <person name="Suyama M."/>
            <person name="Bailey J.A."/>
            <person name="Portnoy M.E."/>
            <person name="Torrents D."/>
            <person name="Chinwalla A.T."/>
            <person name="Gish W.R."/>
            <person name="Eddy S.R."/>
            <person name="McPherson J.D."/>
            <person name="Olson M.V."/>
            <person name="Eichler E.E."/>
            <person name="Green E.D."/>
            <person name="Waterston R.H."/>
            <person name="Wilson R.K."/>
        </authorList>
    </citation>
    <scope>NUCLEOTIDE SEQUENCE [LARGE SCALE GENOMIC DNA] (IMGT ALLELE TRBV6-1*01)</scope>
</reference>
<reference key="2">
    <citation type="book" date="2001" name="The T Cell Receptor FactsBook.">
        <title>The T Cell Receptor FactsBook.</title>
        <editorList>
            <person name="Lefranc M.P."/>
            <person name="Lefranc G."/>
        </editorList>
        <authorList>
            <person name="Lefranc M.P."/>
            <person name="Lefranc G."/>
        </authorList>
    </citation>
    <scope>NOMENCLATURE</scope>
</reference>
<reference key="3">
    <citation type="journal article" date="2004" name="Nat. Rev. Immunol.">
        <title>The many important facets of T-cell repertoire diversity.</title>
        <authorList>
            <person name="Nikolich-Zugich J."/>
            <person name="Slifka M.K."/>
            <person name="Messaoudi I."/>
        </authorList>
    </citation>
    <scope>REVIEW ON T CELL REPERTOIRE DIVERSITY</scope>
</reference>
<reference key="4">
    <citation type="journal article" date="2010" name="Cold Spring Harb. Perspect. Biol.">
        <title>Structural biology of the T-cell receptor: insights into receptor assembly, ligand recognition, and initiation of signaling.</title>
        <authorList>
            <person name="Wucherpfennig K.W."/>
            <person name="Gagnon E."/>
            <person name="Call M.J."/>
            <person name="Huseby E.S."/>
            <person name="Call M.E."/>
        </authorList>
    </citation>
    <scope>REVIEW ON T CELL RECEPTOR-CD3 COMPLEX ASSEMBLY</scope>
    <scope>SUBCELLULAR LOCATION</scope>
</reference>
<reference key="5">
    <citation type="journal article" date="2013" name="Nat. Rev. Immunol.">
        <title>T cell receptor signalling networks: branched, diversified and bounded.</title>
        <authorList>
            <person name="Brownlie R.J."/>
            <person name="Zamoyska R."/>
        </authorList>
    </citation>
    <scope>REVIEW ON T CELL RECEPTOR SIGNALING</scope>
</reference>
<reference key="6">
    <citation type="journal article" date="2014" name="Front. Immunol.">
        <title>Immunoglobulin and T Cell Receptor Genes: IMGT((R)) and the Birth and Rise of Immunoinformatics.</title>
        <authorList>
            <person name="Lefranc M.P."/>
        </authorList>
    </citation>
    <scope>NOMENCLATURE</scope>
</reference>
<reference key="7">
    <citation type="journal article" date="2015" name="Annu. Rev. Immunol.">
        <title>T cell antigen receptor recognition of antigen-presenting molecules.</title>
        <authorList>
            <person name="Rossjohn J."/>
            <person name="Gras S."/>
            <person name="Miles J.J."/>
            <person name="Turner S.J."/>
            <person name="Godfrey D.I."/>
            <person name="McCluskey J."/>
        </authorList>
    </citation>
    <scope>REVIEW ON FUNCTION</scope>
</reference>
<organism>
    <name type="scientific">Homo sapiens</name>
    <name type="common">Human</name>
    <dbReference type="NCBI Taxonomy" id="9606"/>
    <lineage>
        <taxon>Eukaryota</taxon>
        <taxon>Metazoa</taxon>
        <taxon>Chordata</taxon>
        <taxon>Craniata</taxon>
        <taxon>Vertebrata</taxon>
        <taxon>Euteleostomi</taxon>
        <taxon>Mammalia</taxon>
        <taxon>Eutheria</taxon>
        <taxon>Euarchontoglires</taxon>
        <taxon>Primates</taxon>
        <taxon>Haplorrhini</taxon>
        <taxon>Catarrhini</taxon>
        <taxon>Hominidae</taxon>
        <taxon>Homo</taxon>
    </lineage>
</organism>
<accession>A0A0K0K1D8</accession>
<accession>A0A0B4J1U5</accession>
<accession>A0A586</accession>
<comment type="function">
    <text evidence="3 5 6 7">V region of the variable domain of T cell receptor (TR) beta chain that participates in the antigen recognition (PubMed:24600447). Alpha-beta T cell receptors are antigen specific receptors which are essential to the immune response and are present on the cell surface of T lymphocytes. Recognize peptide-major histocompatibility (MH) (pMH) complexes that are displayed by antigen presenting cells (APC), a prerequisite for efficient T cell adaptive immunity against pathogens (PubMed:25493333). Binding of alpha-beta TR to pMH complex initiates TR-CD3 clustering on the cell surface and intracellular activation of LCK that phosphorylates the ITAM motifs of CD3G, CD3D, CD3E and CD247 enabling the recruitment of ZAP70. In turn ZAP70 phosphorylates LAT, which recruits numerous signaling molecules to form the LAT signalosome. The LAT signalosome propagates signal branching to three major signaling pathways, the calcium, the mitogen-activated protein kinase (MAPK) kinase and the nuclear factor NF-kappa-B (NF-kB) pathways, leading to the mobilization of transcription factors that are critical for gene expression and essential for T cell growth and differentiation (PubMed:23524462). The T cell repertoire is generated in the thymus, by V-(D)-J rearrangement. This repertoire is then shaped by intrathymic selection events to generate a peripheral T cell pool of self-MH restricted, non-autoaggressive T cells. Post-thymic interaction of alpha-beta TR with the pMH complexes shapes TR structural and functional avidity (PubMed:15040585).</text>
</comment>
<comment type="subunit">
    <text evidence="4">Alpha-beta TR is a heterodimer composed of an alpha and beta chain; disulfide-linked. The alpha-beta TR is associated with the transmembrane signaling CD3 coreceptor proteins to form the TR-CD3 (TcR or TCR). The assembly of alpha-beta TR heterodimers with CD3 occurs in the endoplasmic reticulum where a single alpha-beta TR heterodimer associates with one CD3D-CD3E heterodimer, one CD3G-CD3E heterodimer and one CD247 homodimer forming a stable octameric structure. CD3D-CD3E and CD3G-CD3E heterodimers preferentially associate with TR alpha and TR beta chains, respectively. The association of the CD247 homodimer is the last step of TcR assembly in the endoplasmic reticulum and is required for transport to the cell surface.</text>
</comment>
<comment type="subcellular location">
    <subcellularLocation>
        <location evidence="4">Cell membrane</location>
    </subcellularLocation>
</comment>
<comment type="polymorphism">
    <text evidence="9">There are several alleles. The sequence shown is that of IMGT allele TRBV6-1*01.</text>
</comment>
<feature type="signal peptide" evidence="1">
    <location>
        <begin position="1"/>
        <end position="21"/>
    </location>
</feature>
<feature type="chain" id="PRO_5010036193" description="T cell receptor beta variable 6-1" evidence="1">
    <location>
        <begin position="22"/>
        <end position="114"/>
    </location>
</feature>
<feature type="domain" description="Ig-like" evidence="2">
    <location>
        <begin position="22"/>
        <end position="114" status="greater than"/>
    </location>
</feature>
<feature type="glycosylation site" description="N-linked (GlcNAc...) asparagine" evidence="1">
    <location>
        <position position="84"/>
    </location>
</feature>
<feature type="disulfide bond" evidence="2">
    <location>
        <begin position="42"/>
        <end position="110"/>
    </location>
</feature>
<feature type="non-terminal residue">
    <location>
        <position position="114"/>
    </location>
</feature>
<proteinExistence type="evidence at protein level"/>
<dbReference type="EMBL" id="AC245088">
    <property type="status" value="NOT_ANNOTATED_CDS"/>
    <property type="molecule type" value="Genomic_DNA"/>
</dbReference>
<dbReference type="SMR" id="A0A0K0K1D8"/>
<dbReference type="FunCoup" id="A0A0K0K1D8">
    <property type="interactions" value="441"/>
</dbReference>
<dbReference type="IMGT_GENE-DB" id="TRBV6-1"/>
<dbReference type="GlyCosmos" id="A0A0K0K1D8">
    <property type="glycosylation" value="1 site, No reported glycans"/>
</dbReference>
<dbReference type="GlyGen" id="A0A0K0K1D8">
    <property type="glycosylation" value="1 site"/>
</dbReference>
<dbReference type="BioMuta" id="TRBV6-1"/>
<dbReference type="MassIVE" id="A0A0K0K1D8"/>
<dbReference type="Ensembl" id="ENST00000390353.2">
    <property type="protein sequence ID" value="ENSP00000374876.2"/>
    <property type="gene ID" value="ENSG00000211706.2"/>
</dbReference>
<dbReference type="Ensembl" id="ENST00000631557.1">
    <property type="protein sequence ID" value="ENSP00000488756.1"/>
    <property type="gene ID" value="ENSG00000281970.1"/>
</dbReference>
<dbReference type="UCSC" id="uc033ajw.2">
    <property type="organism name" value="human"/>
</dbReference>
<dbReference type="AGR" id="HGNC:12226"/>
<dbReference type="GeneCards" id="TRBV6-1"/>
<dbReference type="HGNC" id="HGNC:12226">
    <property type="gene designation" value="TRBV6-1"/>
</dbReference>
<dbReference type="HPA" id="ENSG00000211706">
    <property type="expression patterns" value="Tissue enriched (lymphoid)"/>
</dbReference>
<dbReference type="neXtProt" id="NX_A0A0K0K1D8"/>
<dbReference type="OpenTargets" id="ENSG00000211706"/>
<dbReference type="VEuPathDB" id="HostDB:ENSG00000211706"/>
<dbReference type="GeneTree" id="ENSGT00940000154542"/>
<dbReference type="InParanoid" id="A0A0K0K1D8"/>
<dbReference type="OMA" id="HYSVAAP"/>
<dbReference type="OrthoDB" id="9049585at2759"/>
<dbReference type="PAN-GO" id="A0A0K0K1D8">
    <property type="GO annotations" value="2 GO annotations based on evolutionary models"/>
</dbReference>
<dbReference type="ChiTaRS" id="TRBV6-1">
    <property type="organism name" value="human"/>
</dbReference>
<dbReference type="Pharos" id="A0A0K0K1D8">
    <property type="development level" value="Tdark"/>
</dbReference>
<dbReference type="PRO" id="PR:A0A0K0K1D8"/>
<dbReference type="Proteomes" id="UP000005640">
    <property type="component" value="Chromosome 7"/>
</dbReference>
<dbReference type="RNAct" id="A0A0K0K1D8">
    <property type="molecule type" value="protein"/>
</dbReference>
<dbReference type="Bgee" id="ENSG00000211706">
    <property type="expression patterns" value="Expressed in lymph node and 77 other cell types or tissues"/>
</dbReference>
<dbReference type="GO" id="GO:0005886">
    <property type="term" value="C:plasma membrane"/>
    <property type="evidence" value="ECO:0000318"/>
    <property type="project" value="GO_Central"/>
</dbReference>
<dbReference type="GO" id="GO:0042101">
    <property type="term" value="C:T cell receptor complex"/>
    <property type="evidence" value="ECO:0007669"/>
    <property type="project" value="UniProtKB-KW"/>
</dbReference>
<dbReference type="GO" id="GO:0002250">
    <property type="term" value="P:adaptive immune response"/>
    <property type="evidence" value="ECO:0007669"/>
    <property type="project" value="UniProtKB-KW"/>
</dbReference>
<dbReference type="GO" id="GO:0007166">
    <property type="term" value="P:cell surface receptor signaling pathway"/>
    <property type="evidence" value="ECO:0000318"/>
    <property type="project" value="GO_Central"/>
</dbReference>
<dbReference type="Gene3D" id="2.60.40.10">
    <property type="entry name" value="Immunoglobulins"/>
    <property type="match status" value="1"/>
</dbReference>
<dbReference type="InterPro" id="IPR007110">
    <property type="entry name" value="Ig-like_dom"/>
</dbReference>
<dbReference type="InterPro" id="IPR036179">
    <property type="entry name" value="Ig-like_dom_sf"/>
</dbReference>
<dbReference type="InterPro" id="IPR013783">
    <property type="entry name" value="Ig-like_fold"/>
</dbReference>
<dbReference type="InterPro" id="IPR013106">
    <property type="entry name" value="Ig_V-set"/>
</dbReference>
<dbReference type="InterPro" id="IPR050413">
    <property type="entry name" value="TCR_beta_variable"/>
</dbReference>
<dbReference type="PANTHER" id="PTHR23268:SF107">
    <property type="entry name" value="T CELL RECEPTOR BETA VARIABLE 6-1"/>
    <property type="match status" value="1"/>
</dbReference>
<dbReference type="PANTHER" id="PTHR23268">
    <property type="entry name" value="T-CELL RECEPTOR BETA CHAIN"/>
    <property type="match status" value="1"/>
</dbReference>
<dbReference type="Pfam" id="PF07686">
    <property type="entry name" value="V-set"/>
    <property type="match status" value="1"/>
</dbReference>
<dbReference type="SMART" id="SM00406">
    <property type="entry name" value="IGv"/>
    <property type="match status" value="1"/>
</dbReference>
<dbReference type="SUPFAM" id="SSF48726">
    <property type="entry name" value="Immunoglobulin"/>
    <property type="match status" value="1"/>
</dbReference>
<dbReference type="PROSITE" id="PS50835">
    <property type="entry name" value="IG_LIKE"/>
    <property type="match status" value="1"/>
</dbReference>
<keyword id="KW-1064">Adaptive immunity</keyword>
<keyword id="KW-1003">Cell membrane</keyword>
<keyword id="KW-1015">Disulfide bond</keyword>
<keyword id="KW-0325">Glycoprotein</keyword>
<keyword id="KW-0391">Immunity</keyword>
<keyword id="KW-0393">Immunoglobulin domain</keyword>
<keyword id="KW-0472">Membrane</keyword>
<keyword id="KW-1267">Proteomics identification</keyword>
<keyword id="KW-0675">Receptor</keyword>
<keyword id="KW-1185">Reference proteome</keyword>
<keyword id="KW-0732">Signal</keyword>
<keyword id="KW-1279">T cell receptor</keyword>